<gene>
    <name evidence="1" type="primary">hflD</name>
    <name type="ordered locus">ABO_1274</name>
</gene>
<feature type="chain" id="PRO_0000390635" description="High frequency lysogenization protein HflD homolog">
    <location>
        <begin position="1"/>
        <end position="213"/>
    </location>
</feature>
<keyword id="KW-0997">Cell inner membrane</keyword>
<keyword id="KW-1003">Cell membrane</keyword>
<keyword id="KW-0963">Cytoplasm</keyword>
<keyword id="KW-0472">Membrane</keyword>
<keyword id="KW-1185">Reference proteome</keyword>
<protein>
    <recommendedName>
        <fullName evidence="1">High frequency lysogenization protein HflD homolog</fullName>
    </recommendedName>
</protein>
<organism>
    <name type="scientific">Alcanivorax borkumensis (strain ATCC 700651 / DSM 11573 / NCIMB 13689 / SK2)</name>
    <dbReference type="NCBI Taxonomy" id="393595"/>
    <lineage>
        <taxon>Bacteria</taxon>
        <taxon>Pseudomonadati</taxon>
        <taxon>Pseudomonadota</taxon>
        <taxon>Gammaproteobacteria</taxon>
        <taxon>Oceanospirillales</taxon>
        <taxon>Alcanivoracaceae</taxon>
        <taxon>Alcanivorax</taxon>
    </lineage>
</organism>
<sequence length="213" mass="23799">MSERFSPEQQQLLALAAVFEAAQLADDVAQRGDCDSQAFEALIAGVMELDADNFDGVYSQPGLLREGVSLLSRSLSKDSRGANLRPLNYGLALLHLAGKLRNNEDTVSILRNRLLALSGQQAHFDRFSDDAFCHRIAGIYLDTLGTFRFRIQVKGEPAHLQDDNKAARIRALFLAGVRAAFLWHQLGGRRWHLLFQRKRLISVIESIDINGLR</sequence>
<proteinExistence type="inferred from homology"/>
<reference key="1">
    <citation type="journal article" date="2006" name="Nat. Biotechnol.">
        <title>Genome sequence of the ubiquitous hydrocarbon-degrading marine bacterium Alcanivorax borkumensis.</title>
        <authorList>
            <person name="Schneiker S."/>
            <person name="Martins dos Santos V.A.P."/>
            <person name="Bartels D."/>
            <person name="Bekel T."/>
            <person name="Brecht M."/>
            <person name="Buhrmester J."/>
            <person name="Chernikova T.N."/>
            <person name="Denaro R."/>
            <person name="Ferrer M."/>
            <person name="Gertler C."/>
            <person name="Goesmann A."/>
            <person name="Golyshina O.V."/>
            <person name="Kaminski F."/>
            <person name="Khachane A.N."/>
            <person name="Lang S."/>
            <person name="Linke B."/>
            <person name="McHardy A.C."/>
            <person name="Meyer F."/>
            <person name="Nechitaylo T."/>
            <person name="Puehler A."/>
            <person name="Regenhardt D."/>
            <person name="Rupp O."/>
            <person name="Sabirova J.S."/>
            <person name="Selbitschka W."/>
            <person name="Yakimov M.M."/>
            <person name="Timmis K.N."/>
            <person name="Vorhoelter F.-J."/>
            <person name="Weidner S."/>
            <person name="Kaiser O."/>
            <person name="Golyshin P.N."/>
        </authorList>
    </citation>
    <scope>NUCLEOTIDE SEQUENCE [LARGE SCALE GENOMIC DNA]</scope>
    <source>
        <strain>ATCC 700651 / DSM 11573 / NCIMB 13689 / SK2</strain>
    </source>
</reference>
<accession>Q0VQ26</accession>
<comment type="subcellular location">
    <subcellularLocation>
        <location>Cytoplasm</location>
    </subcellularLocation>
    <subcellularLocation>
        <location evidence="1">Cell inner membrane</location>
        <topology evidence="1">Peripheral membrane protein</topology>
        <orientation evidence="1">Cytoplasmic side</orientation>
    </subcellularLocation>
</comment>
<comment type="similarity">
    <text evidence="1">Belongs to the HflD family.</text>
</comment>
<dbReference type="EMBL" id="AM286690">
    <property type="protein sequence ID" value="CAL16722.1"/>
    <property type="molecule type" value="Genomic_DNA"/>
</dbReference>
<dbReference type="RefSeq" id="WP_011588557.1">
    <property type="nucleotide sequence ID" value="NC_008260.1"/>
</dbReference>
<dbReference type="SMR" id="Q0VQ26"/>
<dbReference type="STRING" id="393595.ABO_1274"/>
<dbReference type="KEGG" id="abo:ABO_1274"/>
<dbReference type="eggNOG" id="COG2915">
    <property type="taxonomic scope" value="Bacteria"/>
</dbReference>
<dbReference type="HOGENOM" id="CLU_098920_0_0_6"/>
<dbReference type="OrthoDB" id="9788031at2"/>
<dbReference type="Proteomes" id="UP000008871">
    <property type="component" value="Chromosome"/>
</dbReference>
<dbReference type="GO" id="GO:0005737">
    <property type="term" value="C:cytoplasm"/>
    <property type="evidence" value="ECO:0007669"/>
    <property type="project" value="UniProtKB-SubCell"/>
</dbReference>
<dbReference type="GO" id="GO:0005886">
    <property type="term" value="C:plasma membrane"/>
    <property type="evidence" value="ECO:0007669"/>
    <property type="project" value="UniProtKB-SubCell"/>
</dbReference>
<dbReference type="Gene3D" id="1.10.3890.10">
    <property type="entry name" value="HflD-like"/>
    <property type="match status" value="1"/>
</dbReference>
<dbReference type="HAMAP" id="MF_00695">
    <property type="entry name" value="HflD_protein"/>
    <property type="match status" value="1"/>
</dbReference>
<dbReference type="InterPro" id="IPR007451">
    <property type="entry name" value="HflD"/>
</dbReference>
<dbReference type="InterPro" id="IPR035932">
    <property type="entry name" value="HflD-like_sf"/>
</dbReference>
<dbReference type="NCBIfam" id="NF001246">
    <property type="entry name" value="PRK00218.1-2"/>
    <property type="match status" value="1"/>
</dbReference>
<dbReference type="PANTHER" id="PTHR38100">
    <property type="entry name" value="HIGH FREQUENCY LYSOGENIZATION PROTEIN HFLD"/>
    <property type="match status" value="1"/>
</dbReference>
<dbReference type="PANTHER" id="PTHR38100:SF1">
    <property type="entry name" value="HIGH FREQUENCY LYSOGENIZATION PROTEIN HFLD"/>
    <property type="match status" value="1"/>
</dbReference>
<dbReference type="Pfam" id="PF04356">
    <property type="entry name" value="DUF489"/>
    <property type="match status" value="1"/>
</dbReference>
<dbReference type="SUPFAM" id="SSF101322">
    <property type="entry name" value="YcfC-like"/>
    <property type="match status" value="1"/>
</dbReference>
<evidence type="ECO:0000255" key="1">
    <source>
        <dbReference type="HAMAP-Rule" id="MF_00695"/>
    </source>
</evidence>
<name>HFLD_ALCBS</name>